<comment type="subunit">
    <text evidence="1">Homodimer.</text>
</comment>
<comment type="similarity">
    <text evidence="1">Belongs to the UPF0210 family.</text>
</comment>
<evidence type="ECO:0000255" key="1">
    <source>
        <dbReference type="HAMAP-Rule" id="MF_01221"/>
    </source>
</evidence>
<feature type="chain" id="PRO_1000066749" description="UPF0210 protein CHY_1509">
    <location>
        <begin position="1"/>
        <end position="452"/>
    </location>
</feature>
<sequence length="452" mass="47726">MFNFGEILETLKMIQEENLDIRTITLGVSLLDCVDSSIAKTCENIKQKIREKGQYLVETAKKLEIKYGIPIVNARVAVTPVSLLAGGFTETETVKIGYALEEIAQEIGVNFIGGFSALVHKGFTKGDINVLNTIPRVLAETERVCASINVATTRAGINMDGINFSARIIKETAERTRDKDGLGCAKIVVFANAPEDNPFMAGAFHGVGEADYVVNVGVSGPGVVKRVVEKIPGADLEELANEIKKTAFKITRVGELIGKEAAKMLGVKFGIVDLSLAPTPAMGDSVAEIIEAMGLEYCGAPGTTAALMMLTDAVKKGGAMASSMVGGLSGAFIPVSEDMGMVRAVEVGALNIEKLEAMTAVCSVGLDMIAIPGETPVSTIAGIIADEISIGVINGKTTAVRIIPVPGKKAGEYVEFGGLLGRTVIMDVNRFSSEKFVMRGGRIPAPIQSLRN</sequence>
<reference key="1">
    <citation type="journal article" date="2005" name="PLoS Genet.">
        <title>Life in hot carbon monoxide: the complete genome sequence of Carboxydothermus hydrogenoformans Z-2901.</title>
        <authorList>
            <person name="Wu M."/>
            <person name="Ren Q."/>
            <person name="Durkin A.S."/>
            <person name="Daugherty S.C."/>
            <person name="Brinkac L.M."/>
            <person name="Dodson R.J."/>
            <person name="Madupu R."/>
            <person name="Sullivan S.A."/>
            <person name="Kolonay J.F."/>
            <person name="Nelson W.C."/>
            <person name="Tallon L.J."/>
            <person name="Jones K.M."/>
            <person name="Ulrich L.E."/>
            <person name="Gonzalez J.M."/>
            <person name="Zhulin I.B."/>
            <person name="Robb F.T."/>
            <person name="Eisen J.A."/>
        </authorList>
    </citation>
    <scope>NUCLEOTIDE SEQUENCE [LARGE SCALE GENOMIC DNA]</scope>
    <source>
        <strain>ATCC BAA-161 / DSM 6008 / Z-2901</strain>
    </source>
</reference>
<proteinExistence type="inferred from homology"/>
<accession>Q3ABZ3</accession>
<dbReference type="EMBL" id="CP000141">
    <property type="protein sequence ID" value="ABB14645.1"/>
    <property type="molecule type" value="Genomic_DNA"/>
</dbReference>
<dbReference type="RefSeq" id="WP_011344416.1">
    <property type="nucleotide sequence ID" value="NC_007503.1"/>
</dbReference>
<dbReference type="SMR" id="Q3ABZ3"/>
<dbReference type="STRING" id="246194.CHY_1509"/>
<dbReference type="KEGG" id="chy:CHY_1509"/>
<dbReference type="eggNOG" id="COG2848">
    <property type="taxonomic scope" value="Bacteria"/>
</dbReference>
<dbReference type="HOGENOM" id="CLU_048704_0_0_9"/>
<dbReference type="InParanoid" id="Q3ABZ3"/>
<dbReference type="OrthoDB" id="9763001at2"/>
<dbReference type="Proteomes" id="UP000002706">
    <property type="component" value="Chromosome"/>
</dbReference>
<dbReference type="CDD" id="cd08025">
    <property type="entry name" value="RNR_PFL_like_DUF711"/>
    <property type="match status" value="1"/>
</dbReference>
<dbReference type="Gene3D" id="3.20.70.20">
    <property type="match status" value="1"/>
</dbReference>
<dbReference type="HAMAP" id="MF_01221">
    <property type="entry name" value="UPF0210"/>
    <property type="match status" value="1"/>
</dbReference>
<dbReference type="InterPro" id="IPR007841">
    <property type="entry name" value="UPF0210"/>
</dbReference>
<dbReference type="NCBIfam" id="NF003700">
    <property type="entry name" value="PRK05313.1"/>
    <property type="match status" value="1"/>
</dbReference>
<dbReference type="PANTHER" id="PTHR37560:SF1">
    <property type="entry name" value="UPF0210 PROTEIN MJ1665"/>
    <property type="match status" value="1"/>
</dbReference>
<dbReference type="PANTHER" id="PTHR37560">
    <property type="entry name" value="UPF0210 PROTEIN SPR0218"/>
    <property type="match status" value="1"/>
</dbReference>
<dbReference type="Pfam" id="PF05167">
    <property type="entry name" value="DUF711"/>
    <property type="match status" value="1"/>
</dbReference>
<dbReference type="SUPFAM" id="SSF51998">
    <property type="entry name" value="PFL-like glycyl radical enzymes"/>
    <property type="match status" value="1"/>
</dbReference>
<organism>
    <name type="scientific">Carboxydothermus hydrogenoformans (strain ATCC BAA-161 / DSM 6008 / Z-2901)</name>
    <dbReference type="NCBI Taxonomy" id="246194"/>
    <lineage>
        <taxon>Bacteria</taxon>
        <taxon>Bacillati</taxon>
        <taxon>Bacillota</taxon>
        <taxon>Clostridia</taxon>
        <taxon>Thermoanaerobacterales</taxon>
        <taxon>Thermoanaerobacteraceae</taxon>
        <taxon>Carboxydothermus</taxon>
    </lineage>
</organism>
<name>Y1509_CARHZ</name>
<gene>
    <name type="ordered locus">CHY_1509</name>
</gene>
<protein>
    <recommendedName>
        <fullName evidence="1">UPF0210 protein CHY_1509</fullName>
    </recommendedName>
</protein>
<keyword id="KW-1185">Reference proteome</keyword>